<sequence length="263" mass="27223">MTQPSLNPLVIKLGGAALSCSQTLSQLFGAIASYQQKEQRQIVIVHGGGYLVDELMEKLQLPTVKKNGLRVTPYDQIPLIAGALAGTANKLLQGQAMADGLNAIGLSLADGGLCQVEELDPELGAVGKATPGDSRLLQTILNAGALPIISSIGLTAQGQLMNVNADQAAVAVAGALDAQLVLLSDVSGVLDGKGHLIKSLNQQEADALIAGKVITDGMIVKVQAALEAANDLGRAIEVATWRYPENLEKLFAGESIGTQFLPA</sequence>
<comment type="function">
    <text evidence="1">Catalyzes the ATP-dependent phosphorylation of N-acetyl-L-glutamate.</text>
</comment>
<comment type="catalytic activity">
    <reaction evidence="1">
        <text>N-acetyl-L-glutamate + ATP = N-acetyl-L-glutamyl 5-phosphate + ADP</text>
        <dbReference type="Rhea" id="RHEA:14629"/>
        <dbReference type="ChEBI" id="CHEBI:30616"/>
        <dbReference type="ChEBI" id="CHEBI:44337"/>
        <dbReference type="ChEBI" id="CHEBI:57936"/>
        <dbReference type="ChEBI" id="CHEBI:456216"/>
        <dbReference type="EC" id="2.7.2.8"/>
    </reaction>
</comment>
<comment type="pathway">
    <text evidence="1">Amino-acid biosynthesis; L-arginine biosynthesis; N(2)-acetyl-L-ornithine from L-glutamate: step 2/4.</text>
</comment>
<comment type="subcellular location">
    <subcellularLocation>
        <location evidence="1">Cytoplasm</location>
    </subcellularLocation>
</comment>
<comment type="similarity">
    <text evidence="1">Belongs to the acetylglutamate kinase family. ArgB subfamily.</text>
</comment>
<comment type="sequence caution" evidence="2">
    <conflict type="erroneous initiation">
        <sequence resource="EMBL-CDS" id="BAC95765"/>
    </conflict>
</comment>
<proteinExistence type="inferred from homology"/>
<keyword id="KW-0028">Amino-acid biosynthesis</keyword>
<keyword id="KW-0055">Arginine biosynthesis</keyword>
<keyword id="KW-0067">ATP-binding</keyword>
<keyword id="KW-0963">Cytoplasm</keyword>
<keyword id="KW-0418">Kinase</keyword>
<keyword id="KW-0547">Nucleotide-binding</keyword>
<keyword id="KW-0808">Transferase</keyword>
<dbReference type="EC" id="2.7.2.8" evidence="1"/>
<dbReference type="EMBL" id="BA000037">
    <property type="protein sequence ID" value="BAC95765.1"/>
    <property type="status" value="ALT_INIT"/>
    <property type="molecule type" value="Genomic_DNA"/>
</dbReference>
<dbReference type="RefSeq" id="WP_043877337.1">
    <property type="nucleotide sequence ID" value="NC_005139.1"/>
</dbReference>
<dbReference type="SMR" id="Q7MH71"/>
<dbReference type="STRING" id="672.VV93_v1c27290"/>
<dbReference type="KEGG" id="vvy:VV3001"/>
<dbReference type="PATRIC" id="fig|196600.6.peg.2978"/>
<dbReference type="eggNOG" id="COG0548">
    <property type="taxonomic scope" value="Bacteria"/>
</dbReference>
<dbReference type="HOGENOM" id="CLU_053680_1_1_6"/>
<dbReference type="UniPathway" id="UPA00068">
    <property type="reaction ID" value="UER00107"/>
</dbReference>
<dbReference type="Proteomes" id="UP000002675">
    <property type="component" value="Chromosome I"/>
</dbReference>
<dbReference type="GO" id="GO:0005737">
    <property type="term" value="C:cytoplasm"/>
    <property type="evidence" value="ECO:0007669"/>
    <property type="project" value="UniProtKB-SubCell"/>
</dbReference>
<dbReference type="GO" id="GO:0003991">
    <property type="term" value="F:acetylglutamate kinase activity"/>
    <property type="evidence" value="ECO:0007669"/>
    <property type="project" value="UniProtKB-UniRule"/>
</dbReference>
<dbReference type="GO" id="GO:0005524">
    <property type="term" value="F:ATP binding"/>
    <property type="evidence" value="ECO:0007669"/>
    <property type="project" value="UniProtKB-UniRule"/>
</dbReference>
<dbReference type="GO" id="GO:0042450">
    <property type="term" value="P:arginine biosynthetic process via ornithine"/>
    <property type="evidence" value="ECO:0007669"/>
    <property type="project" value="UniProtKB-UniRule"/>
</dbReference>
<dbReference type="GO" id="GO:0006526">
    <property type="term" value="P:L-arginine biosynthetic process"/>
    <property type="evidence" value="ECO:0007669"/>
    <property type="project" value="UniProtKB-UniPathway"/>
</dbReference>
<dbReference type="CDD" id="cd04249">
    <property type="entry name" value="AAK_NAGK-NC"/>
    <property type="match status" value="1"/>
</dbReference>
<dbReference type="Gene3D" id="3.40.1160.10">
    <property type="entry name" value="Acetylglutamate kinase-like"/>
    <property type="match status" value="1"/>
</dbReference>
<dbReference type="HAMAP" id="MF_00082">
    <property type="entry name" value="ArgB"/>
    <property type="match status" value="1"/>
</dbReference>
<dbReference type="InterPro" id="IPR036393">
    <property type="entry name" value="AceGlu_kinase-like_sf"/>
</dbReference>
<dbReference type="InterPro" id="IPR004662">
    <property type="entry name" value="AcgluKinase_fam"/>
</dbReference>
<dbReference type="InterPro" id="IPR037528">
    <property type="entry name" value="ArgB"/>
</dbReference>
<dbReference type="InterPro" id="IPR001048">
    <property type="entry name" value="Asp/Glu/Uridylate_kinase"/>
</dbReference>
<dbReference type="InterPro" id="IPR041731">
    <property type="entry name" value="NAGK-NC"/>
</dbReference>
<dbReference type="NCBIfam" id="TIGR00761">
    <property type="entry name" value="argB"/>
    <property type="match status" value="1"/>
</dbReference>
<dbReference type="PANTHER" id="PTHR23342">
    <property type="entry name" value="N-ACETYLGLUTAMATE SYNTHASE"/>
    <property type="match status" value="1"/>
</dbReference>
<dbReference type="PANTHER" id="PTHR23342:SF0">
    <property type="entry name" value="N-ACETYLGLUTAMATE SYNTHASE, MITOCHONDRIAL"/>
    <property type="match status" value="1"/>
</dbReference>
<dbReference type="Pfam" id="PF00696">
    <property type="entry name" value="AA_kinase"/>
    <property type="match status" value="1"/>
</dbReference>
<dbReference type="PIRSF" id="PIRSF000728">
    <property type="entry name" value="NAGK"/>
    <property type="match status" value="1"/>
</dbReference>
<dbReference type="SUPFAM" id="SSF53633">
    <property type="entry name" value="Carbamate kinase-like"/>
    <property type="match status" value="1"/>
</dbReference>
<name>ARGB_VIBVY</name>
<feature type="chain" id="PRO_0000112683" description="Acetylglutamate kinase">
    <location>
        <begin position="1"/>
        <end position="263"/>
    </location>
</feature>
<feature type="binding site" evidence="1">
    <location>
        <begin position="48"/>
        <end position="49"/>
    </location>
    <ligand>
        <name>substrate</name>
    </ligand>
</feature>
<feature type="binding site" evidence="1">
    <location>
        <position position="70"/>
    </location>
    <ligand>
        <name>substrate</name>
    </ligand>
</feature>
<feature type="binding site" evidence="1">
    <location>
        <position position="162"/>
    </location>
    <ligand>
        <name>substrate</name>
    </ligand>
</feature>
<feature type="site" description="Transition state stabilizer" evidence="1">
    <location>
        <position position="12"/>
    </location>
</feature>
<feature type="site" description="Transition state stabilizer" evidence="1">
    <location>
        <position position="221"/>
    </location>
</feature>
<organism>
    <name type="scientific">Vibrio vulnificus (strain YJ016)</name>
    <dbReference type="NCBI Taxonomy" id="196600"/>
    <lineage>
        <taxon>Bacteria</taxon>
        <taxon>Pseudomonadati</taxon>
        <taxon>Pseudomonadota</taxon>
        <taxon>Gammaproteobacteria</taxon>
        <taxon>Vibrionales</taxon>
        <taxon>Vibrionaceae</taxon>
        <taxon>Vibrio</taxon>
    </lineage>
</organism>
<accession>Q7MH71</accession>
<protein>
    <recommendedName>
        <fullName evidence="1">Acetylglutamate kinase</fullName>
        <ecNumber evidence="1">2.7.2.8</ecNumber>
    </recommendedName>
    <alternativeName>
        <fullName evidence="1">N-acetyl-L-glutamate 5-phosphotransferase</fullName>
    </alternativeName>
    <alternativeName>
        <fullName evidence="1">NAG kinase</fullName>
        <shortName evidence="1">NAGK</shortName>
    </alternativeName>
</protein>
<gene>
    <name evidence="1" type="primary">argB</name>
    <name type="ordered locus">VV3001</name>
</gene>
<reference key="1">
    <citation type="journal article" date="2003" name="Genome Res.">
        <title>Comparative genome analysis of Vibrio vulnificus, a marine pathogen.</title>
        <authorList>
            <person name="Chen C.-Y."/>
            <person name="Wu K.-M."/>
            <person name="Chang Y.-C."/>
            <person name="Chang C.-H."/>
            <person name="Tsai H.-C."/>
            <person name="Liao T.-L."/>
            <person name="Liu Y.-M."/>
            <person name="Chen H.-J."/>
            <person name="Shen A.B.-T."/>
            <person name="Li J.-C."/>
            <person name="Su T.-L."/>
            <person name="Shao C.-P."/>
            <person name="Lee C.-T."/>
            <person name="Hor L.-I."/>
            <person name="Tsai S.-F."/>
        </authorList>
    </citation>
    <scope>NUCLEOTIDE SEQUENCE [LARGE SCALE GENOMIC DNA]</scope>
    <source>
        <strain>YJ016</strain>
    </source>
</reference>
<evidence type="ECO:0000255" key="1">
    <source>
        <dbReference type="HAMAP-Rule" id="MF_00082"/>
    </source>
</evidence>
<evidence type="ECO:0000305" key="2"/>